<gene>
    <name type="primary">KRTAP5-3</name>
    <name type="synonym">KAP5-9</name>
    <name type="synonym">KAP5.3</name>
    <name type="synonym">KRTAP5-9</name>
    <name type="synonym">KRTAP5.3</name>
    <name type="synonym">KRTAP5.9</name>
</gene>
<organism>
    <name type="scientific">Homo sapiens</name>
    <name type="common">Human</name>
    <dbReference type="NCBI Taxonomy" id="9606"/>
    <lineage>
        <taxon>Eukaryota</taxon>
        <taxon>Metazoa</taxon>
        <taxon>Chordata</taxon>
        <taxon>Craniata</taxon>
        <taxon>Vertebrata</taxon>
        <taxon>Euteleostomi</taxon>
        <taxon>Mammalia</taxon>
        <taxon>Eutheria</taxon>
        <taxon>Euarchontoglires</taxon>
        <taxon>Primates</taxon>
        <taxon>Haplorrhini</taxon>
        <taxon>Catarrhini</taxon>
        <taxon>Hominidae</taxon>
        <taxon>Homo</taxon>
    </lineage>
</organism>
<dbReference type="EMBL" id="AB126072">
    <property type="protein sequence ID" value="BAD20199.1"/>
    <property type="molecule type" value="mRNA"/>
</dbReference>
<dbReference type="EMBL" id="AJ628246">
    <property type="protein sequence ID" value="CAF31638.1"/>
    <property type="molecule type" value="mRNA"/>
</dbReference>
<dbReference type="EMBL" id="AY597812">
    <property type="protein sequence ID" value="AAT09005.1"/>
    <property type="molecule type" value="mRNA"/>
</dbReference>
<dbReference type="CCDS" id="CCDS41591.1"/>
<dbReference type="RefSeq" id="NP_001012726.1">
    <property type="nucleotide sequence ID" value="NM_001012708.2"/>
</dbReference>
<dbReference type="BioGRID" id="132267">
    <property type="interactions" value="66"/>
</dbReference>
<dbReference type="FunCoup" id="Q6L8H2">
    <property type="interactions" value="39"/>
</dbReference>
<dbReference type="IntAct" id="Q6L8H2">
    <property type="interactions" value="42"/>
</dbReference>
<dbReference type="DrugBank" id="DB02379">
    <property type="generic name" value="Beta-D-Glucose"/>
</dbReference>
<dbReference type="iPTMnet" id="Q6L8H2"/>
<dbReference type="PhosphoSitePlus" id="Q6L8H2"/>
<dbReference type="BioMuta" id="KRTAP5-3"/>
<dbReference type="MassIVE" id="Q6L8H2"/>
<dbReference type="PeptideAtlas" id="Q6L8H2"/>
<dbReference type="ProteomicsDB" id="66553"/>
<dbReference type="DNASU" id="387266"/>
<dbReference type="Ensembl" id="ENST00000399685.1">
    <property type="protein sequence ID" value="ENSP00000382592.1"/>
    <property type="gene ID" value="ENSG00000196224.7"/>
</dbReference>
<dbReference type="Ensembl" id="ENST00000620564.1">
    <property type="protein sequence ID" value="ENSP00000478585.1"/>
    <property type="gene ID" value="ENSG00000275920.1"/>
</dbReference>
<dbReference type="Ensembl" id="ENST00000627584.1">
    <property type="protein sequence ID" value="ENSP00000487561.1"/>
    <property type="gene ID" value="ENSG00000281191.2"/>
</dbReference>
<dbReference type="Ensembl" id="ENST00000707560.1">
    <property type="protein sequence ID" value="ENSP00000516913.1"/>
    <property type="gene ID" value="ENSG00000291435.1"/>
</dbReference>
<dbReference type="GeneID" id="387266"/>
<dbReference type="KEGG" id="hsa:387266"/>
<dbReference type="MANE-Select" id="ENST00000399685.1">
    <property type="protein sequence ID" value="ENSP00000382592.1"/>
    <property type="RefSeq nucleotide sequence ID" value="NM_001012708.2"/>
    <property type="RefSeq protein sequence ID" value="NP_001012726.1"/>
</dbReference>
<dbReference type="UCSC" id="uc001ltw.1">
    <property type="organism name" value="human"/>
</dbReference>
<dbReference type="AGR" id="HGNC:23598"/>
<dbReference type="CTD" id="387266"/>
<dbReference type="GeneCards" id="KRTAP5-3"/>
<dbReference type="HGNC" id="HGNC:23598">
    <property type="gene designation" value="KRTAP5-3"/>
</dbReference>
<dbReference type="HPA" id="ENSG00000196224">
    <property type="expression patterns" value="Tissue enriched (skin)"/>
</dbReference>
<dbReference type="neXtProt" id="NX_Q6L8H2"/>
<dbReference type="OpenTargets" id="ENSG00000196224"/>
<dbReference type="PharmGKB" id="PA134865306"/>
<dbReference type="VEuPathDB" id="HostDB:ENSG00000196224"/>
<dbReference type="GeneTree" id="ENSGT01050000245245"/>
<dbReference type="HOGENOM" id="CLU_097966_0_0_1"/>
<dbReference type="InParanoid" id="Q6L8H2"/>
<dbReference type="OMA" id="CACHCAS"/>
<dbReference type="PAN-GO" id="Q6L8H2">
    <property type="GO annotations" value="0 GO annotations based on evolutionary models"/>
</dbReference>
<dbReference type="PathwayCommons" id="Q6L8H2"/>
<dbReference type="Reactome" id="R-HSA-6805567">
    <property type="pathway name" value="Keratinization"/>
</dbReference>
<dbReference type="SignaLink" id="Q6L8H2"/>
<dbReference type="BioGRID-ORCS" id="387266">
    <property type="hits" value="101 hits in 1052 CRISPR screens"/>
</dbReference>
<dbReference type="GenomeRNAi" id="387266"/>
<dbReference type="Pharos" id="Q6L8H2">
    <property type="development level" value="Tdark"/>
</dbReference>
<dbReference type="PRO" id="PR:Q6L8H2"/>
<dbReference type="Proteomes" id="UP000005640">
    <property type="component" value="Chromosome 11"/>
</dbReference>
<dbReference type="RNAct" id="Q6L8H2">
    <property type="molecule type" value="protein"/>
</dbReference>
<dbReference type="Bgee" id="ENSG00000196224">
    <property type="expression patterns" value="Expressed in cortical plate and 14 other cell types or tissues"/>
</dbReference>
<dbReference type="GO" id="GO:0005829">
    <property type="term" value="C:cytosol"/>
    <property type="evidence" value="ECO:0000304"/>
    <property type="project" value="Reactome"/>
</dbReference>
<dbReference type="GO" id="GO:0005882">
    <property type="term" value="C:intermediate filament"/>
    <property type="evidence" value="ECO:0007669"/>
    <property type="project" value="UniProtKB-KW"/>
</dbReference>
<name>KRA53_HUMAN</name>
<evidence type="ECO:0000269" key="1">
    <source>
    </source>
</evidence>
<evidence type="ECO:0000305" key="2"/>
<comment type="function">
    <text>In the hair cortex, hair keratin intermediate filaments are embedded in an interfilamentous matrix, consisting of hair keratin-associated protein (KRTAP), which are essential for the formation of a rigid and resistant hair shaft through their extensive disulfide bond cross-linking with abundant cysteine residues of hair keratins. The matrix proteins include the high-sulfur and high-glycine-tyrosine keratins.</text>
</comment>
<comment type="subunit">
    <text>Interacts with hair keratins.</text>
</comment>
<comment type="interaction">
    <interactant intactId="EBI-11974251">
        <id>Q6L8H2</id>
    </interactant>
    <interactant intactId="EBI-10173507">
        <id>Q6UY14-3</id>
        <label>ADAMTSL4</label>
    </interactant>
    <organismsDiffer>false</organismsDiffer>
    <experiments>3</experiments>
</comment>
<comment type="interaction">
    <interactant intactId="EBI-11974251">
        <id>Q6L8H2</id>
    </interactant>
    <interactant intactId="EBI-744545">
        <id>Q8NEC5</id>
        <label>CATSPER1</label>
    </interactant>
    <organismsDiffer>false</organismsDiffer>
    <experiments>6</experiments>
</comment>
<comment type="interaction">
    <interactant intactId="EBI-11974251">
        <id>Q6L8H2</id>
    </interactant>
    <interactant intactId="EBI-713677">
        <id>Q9UGL9</id>
        <label>CRCT1</label>
    </interactant>
    <organismsDiffer>false</organismsDiffer>
    <experiments>3</experiments>
</comment>
<comment type="interaction">
    <interactant intactId="EBI-11974251">
        <id>Q6L8H2</id>
    </interactant>
    <interactant intactId="EBI-3867333">
        <id>A8MQ03</id>
        <label>CYSRT1</label>
    </interactant>
    <organismsDiffer>false</organismsDiffer>
    <experiments>3</experiments>
</comment>
<comment type="interaction">
    <interactant intactId="EBI-11974251">
        <id>Q6L8H2</id>
    </interactant>
    <interactant intactId="EBI-947964">
        <id>Q16610</id>
        <label>ECM1</label>
    </interactant>
    <organismsDiffer>false</organismsDiffer>
    <experiments>3</experiments>
</comment>
<comment type="interaction">
    <interactant intactId="EBI-11974251">
        <id>Q6L8H2</id>
    </interactant>
    <interactant intactId="EBI-719816">
        <id>Q9NWN3</id>
        <label>FBXO34</label>
    </interactant>
    <organismsDiffer>false</organismsDiffer>
    <experiments>3</experiments>
</comment>
<comment type="interaction">
    <interactant intactId="EBI-11974251">
        <id>Q6L8H2</id>
    </interactant>
    <interactant intactId="EBI-9050116">
        <id>Q9BTY2</id>
        <label>FUCA2</label>
    </interactant>
    <organismsDiffer>false</organismsDiffer>
    <experiments>3</experiments>
</comment>
<comment type="interaction">
    <interactant intactId="EBI-11974251">
        <id>Q6L8H2</id>
    </interactant>
    <interactant intactId="EBI-374781">
        <id>O76003</id>
        <label>GLRX3</label>
    </interactant>
    <organismsDiffer>false</organismsDiffer>
    <experiments>7</experiments>
</comment>
<comment type="interaction">
    <interactant intactId="EBI-11974251">
        <id>Q6L8H2</id>
    </interactant>
    <interactant intactId="EBI-740785">
        <id>P49639</id>
        <label>HOXA1</label>
    </interactant>
    <organismsDiffer>false</organismsDiffer>
    <experiments>5</experiments>
</comment>
<comment type="interaction">
    <interactant intactId="EBI-11974251">
        <id>Q6L8H2</id>
    </interactant>
    <interactant intactId="EBI-10981970">
        <id>Q5T749</id>
        <label>KPRP</label>
    </interactant>
    <organismsDiffer>false</organismsDiffer>
    <experiments>3</experiments>
</comment>
<comment type="interaction">
    <interactant intactId="EBI-11974251">
        <id>Q6L8H2</id>
    </interactant>
    <interactant intactId="EBI-11749135">
        <id>Q8IUG1</id>
        <label>KRTAP1-3</label>
    </interactant>
    <organismsDiffer>false</organismsDiffer>
    <experiments>3</experiments>
</comment>
<comment type="interaction">
    <interactant intactId="EBI-11974251">
        <id>Q6L8H2</id>
    </interactant>
    <interactant intactId="EBI-11741292">
        <id>Q9BYS1</id>
        <label>KRTAP1-5</label>
    </interactant>
    <organismsDiffer>false</organismsDiffer>
    <experiments>3</experiments>
</comment>
<comment type="interaction">
    <interactant intactId="EBI-11974251">
        <id>Q6L8H2</id>
    </interactant>
    <interactant intactId="EBI-10171774">
        <id>P60410</id>
        <label>KRTAP10-8</label>
    </interactant>
    <organismsDiffer>false</organismsDiffer>
    <experiments>3</experiments>
</comment>
<comment type="interaction">
    <interactant intactId="EBI-11974251">
        <id>Q6L8H2</id>
    </interactant>
    <interactant intactId="EBI-1052037">
        <id>Q8IUC1</id>
        <label>KRTAP11-1</label>
    </interactant>
    <organismsDiffer>false</organismsDiffer>
    <experiments>3</experiments>
</comment>
<comment type="interaction">
    <interactant intactId="EBI-11974251">
        <id>Q6L8H2</id>
    </interactant>
    <interactant intactId="EBI-11992140">
        <id>Q3LI76</id>
        <label>KRTAP15-1</label>
    </interactant>
    <organismsDiffer>false</organismsDiffer>
    <experiments>3</experiments>
</comment>
<comment type="interaction">
    <interactant intactId="EBI-11974251">
        <id>Q6L8H2</id>
    </interactant>
    <interactant intactId="EBI-10172511">
        <id>Q9BYR5</id>
        <label>KRTAP4-2</label>
    </interactant>
    <organismsDiffer>false</organismsDiffer>
    <experiments>3</experiments>
</comment>
<comment type="interaction">
    <interactant intactId="EBI-11974251">
        <id>Q6L8H2</id>
    </interactant>
    <interactant intactId="EBI-12074540">
        <id>Q6L8H4</id>
        <label>KRTAP5-1</label>
    </interactant>
    <organismsDiffer>false</organismsDiffer>
    <experiments>3</experiments>
</comment>
<comment type="interaction">
    <interactant intactId="EBI-11974251">
        <id>Q6L8H2</id>
    </interactant>
    <interactant intactId="EBI-3958099">
        <id>P26371</id>
        <label>KRTAP5-9</label>
    </interactant>
    <organismsDiffer>false</organismsDiffer>
    <experiments>3</experiments>
</comment>
<comment type="interaction">
    <interactant intactId="EBI-11974251">
        <id>Q6L8H2</id>
    </interactant>
    <interactant intactId="EBI-1044640">
        <id>Q9BYQ4</id>
        <label>KRTAP9-2</label>
    </interactant>
    <organismsDiffer>false</organismsDiffer>
    <experiments>3</experiments>
</comment>
<comment type="interaction">
    <interactant intactId="EBI-11974251">
        <id>Q6L8H2</id>
    </interactant>
    <interactant intactId="EBI-1043191">
        <id>Q9BYQ3</id>
        <label>KRTAP9-3</label>
    </interactant>
    <organismsDiffer>false</organismsDiffer>
    <experiments>3</experiments>
</comment>
<comment type="interaction">
    <interactant intactId="EBI-11974251">
        <id>Q6L8H2</id>
    </interactant>
    <interactant intactId="EBI-11962058">
        <id>Q5T7P2</id>
        <label>LCE1A</label>
    </interactant>
    <organismsDiffer>false</organismsDiffer>
    <experiments>3</experiments>
</comment>
<comment type="interaction">
    <interactant intactId="EBI-11974251">
        <id>Q6L8H2</id>
    </interactant>
    <interactant intactId="EBI-10245913">
        <id>Q5T7P3</id>
        <label>LCE1B</label>
    </interactant>
    <organismsDiffer>false</organismsDiffer>
    <experiments>3</experiments>
</comment>
<comment type="interaction">
    <interactant intactId="EBI-11974251">
        <id>Q6L8H2</id>
    </interactant>
    <interactant intactId="EBI-12224199">
        <id>Q5T751</id>
        <label>LCE1C</label>
    </interactant>
    <organismsDiffer>false</organismsDiffer>
    <experiments>3</experiments>
</comment>
<comment type="interaction">
    <interactant intactId="EBI-11974251">
        <id>Q6L8H2</id>
    </interactant>
    <interactant intactId="EBI-11741311">
        <id>Q5T752</id>
        <label>LCE1D</label>
    </interactant>
    <organismsDiffer>false</organismsDiffer>
    <experiments>3</experiments>
</comment>
<comment type="interaction">
    <interactant intactId="EBI-11974251">
        <id>Q6L8H2</id>
    </interactant>
    <interactant intactId="EBI-11958008">
        <id>Q5T754</id>
        <label>LCE1F</label>
    </interactant>
    <organismsDiffer>false</organismsDiffer>
    <experiments>3</experiments>
</comment>
<comment type="interaction">
    <interactant intactId="EBI-11974251">
        <id>Q6L8H2</id>
    </interactant>
    <interactant intactId="EBI-11973993">
        <id>Q5TA81</id>
        <label>LCE2C</label>
    </interactant>
    <organismsDiffer>false</organismsDiffer>
    <experiments>3</experiments>
</comment>
<comment type="interaction">
    <interactant intactId="EBI-11974251">
        <id>Q6L8H2</id>
    </interactant>
    <interactant intactId="EBI-9394625">
        <id>Q5TA76</id>
        <label>LCE3A</label>
    </interactant>
    <organismsDiffer>false</organismsDiffer>
    <experiments>3</experiments>
</comment>
<comment type="interaction">
    <interactant intactId="EBI-11974251">
        <id>Q6L8H2</id>
    </interactant>
    <interactant intactId="EBI-10245291">
        <id>Q5T5A8</id>
        <label>LCE3C</label>
    </interactant>
    <organismsDiffer>false</organismsDiffer>
    <experiments>3</experiments>
</comment>
<comment type="interaction">
    <interactant intactId="EBI-11974251">
        <id>Q6L8H2</id>
    </interactant>
    <interactant intactId="EBI-6658837">
        <id>Q9BYE3</id>
        <label>LCE3D</label>
    </interactant>
    <organismsDiffer>false</organismsDiffer>
    <experiments>5</experiments>
</comment>
<comment type="interaction">
    <interactant intactId="EBI-11974251">
        <id>Q6L8H2</id>
    </interactant>
    <interactant intactId="EBI-10245456">
        <id>Q5T5B0</id>
        <label>LCE3E</label>
    </interactant>
    <organismsDiffer>false</organismsDiffer>
    <experiments>3</experiments>
</comment>
<comment type="interaction">
    <interactant intactId="EBI-11974251">
        <id>Q6L8H2</id>
    </interactant>
    <interactant intactId="EBI-10246358">
        <id>Q5TA78</id>
        <label>LCE4A</label>
    </interactant>
    <organismsDiffer>false</organismsDiffer>
    <experiments>3</experiments>
</comment>
<comment type="interaction">
    <interactant intactId="EBI-11974251">
        <id>Q6L8H2</id>
    </interactant>
    <interactant intactId="EBI-11955689">
        <id>Q5TCM9</id>
        <label>LCE5A</label>
    </interactant>
    <organismsDiffer>false</organismsDiffer>
    <experiments>4</experiments>
</comment>
<comment type="interaction">
    <interactant intactId="EBI-11974251">
        <id>Q6L8H2</id>
    </interactant>
    <interactant intactId="EBI-18115868">
        <id>Q5T871</id>
        <label>LELP1</label>
    </interactant>
    <organismsDiffer>false</organismsDiffer>
    <experiments>3</experiments>
</comment>
<comment type="interaction">
    <interactant intactId="EBI-11974251">
        <id>Q6L8H2</id>
    </interactant>
    <interactant intactId="EBI-16439278">
        <id>Q6FHY5</id>
        <label>MEOX2</label>
    </interactant>
    <organismsDiffer>false</organismsDiffer>
    <experiments>3</experiments>
</comment>
<comment type="interaction">
    <interactant intactId="EBI-11974251">
        <id>Q6L8H2</id>
    </interactant>
    <interactant intactId="EBI-22310682">
        <id>P0DPK4</id>
        <label>NOTCH2NLC</label>
    </interactant>
    <organismsDiffer>false</organismsDiffer>
    <experiments>3</experiments>
</comment>
<comment type="interaction">
    <interactant intactId="EBI-11974251">
        <id>Q6L8H2</id>
    </interactant>
    <interactant intactId="EBI-13644623">
        <id>Q92570</id>
        <label>NR4A3</label>
    </interactant>
    <organismsDiffer>false</organismsDiffer>
    <experiments>3</experiments>
</comment>
<comment type="interaction">
    <interactant intactId="EBI-11974251">
        <id>Q6L8H2</id>
    </interactant>
    <interactant intactId="EBI-1210753">
        <id>Q7Z417</id>
        <label>NUFIP2</label>
    </interactant>
    <organismsDiffer>false</organismsDiffer>
    <experiments>3</experiments>
</comment>
<comment type="interaction">
    <interactant intactId="EBI-11974251">
        <id>Q6L8H2</id>
    </interactant>
    <interactant intactId="EBI-740446">
        <id>P32242</id>
        <label>OTX1</label>
    </interactant>
    <organismsDiffer>false</organismsDiffer>
    <experiments>3</experiments>
</comment>
<comment type="interaction">
    <interactant intactId="EBI-11974251">
        <id>Q6L8H2</id>
    </interactant>
    <interactant intactId="EBI-17236143">
        <id>Q12837</id>
        <label>POU4F2</label>
    </interactant>
    <organismsDiffer>false</organismsDiffer>
    <experiments>3</experiments>
</comment>
<comment type="interaction">
    <interactant intactId="EBI-11974251">
        <id>Q6L8H2</id>
    </interactant>
    <interactant intactId="EBI-720447">
        <id>O60896</id>
        <label>RAMP3</label>
    </interactant>
    <organismsDiffer>false</organismsDiffer>
    <experiments>3</experiments>
</comment>
<comment type="interaction">
    <interactant intactId="EBI-11974251">
        <id>Q6L8H2</id>
    </interactant>
    <interactant intactId="EBI-3918154">
        <id>Q9UGC6</id>
        <label>RGS17</label>
    </interactant>
    <organismsDiffer>false</organismsDiffer>
    <experiments>3</experiments>
</comment>
<comment type="interaction">
    <interactant intactId="EBI-11974251">
        <id>Q6L8H2</id>
    </interactant>
    <interactant intactId="EBI-750494">
        <id>P49901</id>
        <label>SMCP</label>
    </interactant>
    <organismsDiffer>false</organismsDiffer>
    <experiments>5</experiments>
</comment>
<comment type="tissue specificity">
    <text evidence="1">Restricted to hair root, not detected in any other tissues.</text>
</comment>
<comment type="similarity">
    <text evidence="2">Belongs to the KRTAP type 5 family.</text>
</comment>
<accession>Q6L8H2</accession>
<accession>Q6PL44</accession>
<accession>Q701N3</accession>
<proteinExistence type="evidence at protein level"/>
<keyword id="KW-0416">Keratin</keyword>
<keyword id="KW-1267">Proteomics identification</keyword>
<keyword id="KW-1185">Reference proteome</keyword>
<keyword id="KW-0677">Repeat</keyword>
<sequence>MGCSGCSGGCGSSCGGCGSSCGGCGSGYGGCGSGCCVPVCCCKPVCCCVPACSCSSCGSCGGSKGVCGSCGGCKGGCGSCGGSKGGCGSSCCVPVCCSSSCGSCGGSKGVCGFRGGSKGGCGSCGCSQCSCYKPCCCSSGCGSSCCQSSCCKPSCSQSSCCKPCCSQSSCCKPCCCSSGCGSSCCQSSCCKPCCSQSSCCKPCCCSSGCGSSCCQSSCCKPCSSQSSCCVPICCQCKI</sequence>
<feature type="chain" id="PRO_0000184101" description="Keratin-associated protein 5-3">
    <location>
        <begin position="1"/>
        <end position="238"/>
    </location>
</feature>
<feature type="repeat" description="1">
    <location>
        <begin position="35"/>
        <end position="38"/>
    </location>
</feature>
<feature type="repeat" description="2">
    <location>
        <begin position="41"/>
        <end position="44"/>
    </location>
</feature>
<feature type="repeat" description="3">
    <location>
        <begin position="47"/>
        <end position="50"/>
    </location>
</feature>
<feature type="repeat" description="4">
    <location>
        <begin position="91"/>
        <end position="94"/>
    </location>
</feature>
<feature type="repeat" description="5">
    <location>
        <begin position="150"/>
        <end position="153"/>
    </location>
</feature>
<feature type="repeat" description="6">
    <location>
        <begin position="160"/>
        <end position="163"/>
    </location>
</feature>
<feature type="repeat" description="7">
    <location>
        <begin position="170"/>
        <end position="173"/>
    </location>
</feature>
<feature type="repeat" description="8">
    <location>
        <begin position="189"/>
        <end position="192"/>
    </location>
</feature>
<feature type="repeat" description="9">
    <location>
        <begin position="199"/>
        <end position="202"/>
    </location>
</feature>
<feature type="repeat" description="10">
    <location>
        <begin position="218"/>
        <end position="221"/>
    </location>
</feature>
<feature type="repeat" description="11">
    <location>
        <begin position="228"/>
        <end position="231"/>
    </location>
</feature>
<feature type="region of interest" description="11 X 4 AA repeats of C-C-X-P">
    <location>
        <begin position="35"/>
        <end position="231"/>
    </location>
</feature>
<feature type="sequence variant" id="VAR_060115" description="In dbSNP:rs7129002.">
    <original>G</original>
    <variation>S</variation>
    <location>
        <position position="27"/>
    </location>
</feature>
<feature type="sequence variant" id="VAR_060116" description="In dbSNP:rs7108370.">
    <original>Y</original>
    <variation>C</variation>
    <location>
        <position position="28"/>
    </location>
</feature>
<feature type="sequence variant" id="VAR_060117" description="In dbSNP:rs7125831.">
    <original>C</original>
    <variation>S</variation>
    <location>
        <position position="73"/>
    </location>
</feature>
<feature type="sequence variant" id="VAR_060118" description="In dbSNP:rs7125826.">
    <original>G</original>
    <variation>V</variation>
    <location>
        <position position="76"/>
    </location>
</feature>
<feature type="sequence variant" id="VAR_060119" description="In dbSNP:rs7113784.">
    <original>S</original>
    <variation>C</variation>
    <location>
        <position position="83"/>
    </location>
</feature>
<feature type="sequence conflict" description="In Ref. 3; AAT09005." evidence="2" ref="3">
    <original>S</original>
    <variation>C</variation>
    <location>
        <position position="4"/>
    </location>
</feature>
<protein>
    <recommendedName>
        <fullName>Keratin-associated protein 5-3</fullName>
    </recommendedName>
    <alternativeName>
        <fullName>Keratin-associated protein 5-9</fullName>
    </alternativeName>
    <alternativeName>
        <fullName>Keratin-associated protein 5.3</fullName>
    </alternativeName>
    <alternativeName>
        <fullName>Keratin-associated protein 5.9</fullName>
    </alternativeName>
    <alternativeName>
        <fullName>UHS KerB-like</fullName>
    </alternativeName>
    <alternativeName>
        <fullName>Ultrahigh sulfur keratin-associated protein 5.3</fullName>
    </alternativeName>
</protein>
<reference key="1">
    <citation type="journal article" date="2004" name="Biochem. Biophys. Res. Commun.">
        <title>Identification of two novel clusters of ultrahigh-sulfur keratin-associated protein genes on human chromosome 11.</title>
        <authorList>
            <person name="Yahagi S."/>
            <person name="Shibuya K."/>
            <person name="Obayashi I."/>
            <person name="Masaki H."/>
            <person name="Kurata Y."/>
            <person name="Kudoh J."/>
            <person name="Shimizu N."/>
        </authorList>
    </citation>
    <scope>NUCLEOTIDE SEQUENCE [MRNA]</scope>
    <scope>TISSUE SPECIFICITY</scope>
    <source>
        <tissue>Hair root</tissue>
    </source>
</reference>
<reference key="2">
    <citation type="submission" date="2004-02" db="EMBL/GenBank/DDBJ databases">
        <title>Characterization of two domains of keratin associated protein (KAP) family members on human chromosome 11.</title>
        <authorList>
            <person name="Rogers M.A."/>
            <person name="Langbein L."/>
            <person name="Winter H."/>
            <person name="Praetzel S."/>
            <person name="Schweizer J."/>
        </authorList>
    </citation>
    <scope>NUCLEOTIDE SEQUENCE [MRNA] OF 72-238</scope>
    <source>
        <tissue>Scalp</tissue>
    </source>
</reference>
<reference key="3">
    <citation type="submission" date="2004-04" db="EMBL/GenBank/DDBJ databases">
        <authorList>
            <person name="Li H."/>
            <person name="Zhong G."/>
            <person name="Zhou G."/>
            <person name="Shen C."/>
            <person name="Ke R."/>
            <person name="Lin L."/>
            <person name="Yang S."/>
        </authorList>
    </citation>
    <scope>NUCLEOTIDE SEQUENCE [LARGE SCALE MRNA]</scope>
</reference>